<evidence type="ECO:0000255" key="1">
    <source>
        <dbReference type="HAMAP-Rule" id="MF_00815"/>
    </source>
</evidence>
<reference key="1">
    <citation type="journal article" date="2013" name="Plant Physiol.">
        <title>A Nostoc punctiforme Sugar Transporter Necessary to Establish a Cyanobacterium-Plant Symbiosis.</title>
        <authorList>
            <person name="Ekman M."/>
            <person name="Picossi S."/>
            <person name="Campbell E.L."/>
            <person name="Meeks J.C."/>
            <person name="Flores E."/>
        </authorList>
    </citation>
    <scope>NUCLEOTIDE SEQUENCE [LARGE SCALE GENOMIC DNA]</scope>
    <source>
        <strain>ATCC 29133 / PCC 73102</strain>
    </source>
</reference>
<organism>
    <name type="scientific">Nostoc punctiforme (strain ATCC 29133 / PCC 73102)</name>
    <dbReference type="NCBI Taxonomy" id="63737"/>
    <lineage>
        <taxon>Bacteria</taxon>
        <taxon>Bacillati</taxon>
        <taxon>Cyanobacteriota</taxon>
        <taxon>Cyanophyceae</taxon>
        <taxon>Nostocales</taxon>
        <taxon>Nostocaceae</taxon>
        <taxon>Nostoc</taxon>
    </lineage>
</organism>
<name>ATPG_NOSP7</name>
<gene>
    <name evidence="1" type="primary">atpG</name>
    <name evidence="1" type="synonym">atpC</name>
    <name type="ordered locus">Npun_F4864</name>
</gene>
<keyword id="KW-0066">ATP synthesis</keyword>
<keyword id="KW-0139">CF(1)</keyword>
<keyword id="KW-0375">Hydrogen ion transport</keyword>
<keyword id="KW-0406">Ion transport</keyword>
<keyword id="KW-0472">Membrane</keyword>
<keyword id="KW-1185">Reference proteome</keyword>
<keyword id="KW-0793">Thylakoid</keyword>
<keyword id="KW-0813">Transport</keyword>
<comment type="function">
    <text evidence="1">Produces ATP from ADP in the presence of a proton gradient across the membrane. The gamma chain is believed to be important in regulating ATPase activity and the flow of protons through the CF(0) complex.</text>
</comment>
<comment type="subunit">
    <text evidence="1">F-type ATPases have 2 components, CF(1) - the catalytic core - and CF(0) - the membrane proton channel. CF(1) has five subunits: alpha(3), beta(3), gamma(1), delta(1), epsilon(1). CF(0) has three main subunits: a, b and c.</text>
</comment>
<comment type="subcellular location">
    <subcellularLocation>
        <location evidence="1">Cellular thylakoid membrane</location>
        <topology evidence="1">Peripheral membrane protein</topology>
    </subcellularLocation>
</comment>
<comment type="similarity">
    <text evidence="1">Belongs to the ATPase gamma chain family.</text>
</comment>
<feature type="chain" id="PRO_1000134183" description="ATP synthase gamma chain">
    <location>
        <begin position="1"/>
        <end position="315"/>
    </location>
</feature>
<accession>B2J059</accession>
<dbReference type="EMBL" id="CP001037">
    <property type="protein sequence ID" value="ACC83211.1"/>
    <property type="molecule type" value="Genomic_DNA"/>
</dbReference>
<dbReference type="RefSeq" id="WP_012411167.1">
    <property type="nucleotide sequence ID" value="NC_010628.1"/>
</dbReference>
<dbReference type="SMR" id="B2J059"/>
<dbReference type="STRING" id="63737.Npun_F4864"/>
<dbReference type="EnsemblBacteria" id="ACC83211">
    <property type="protein sequence ID" value="ACC83211"/>
    <property type="gene ID" value="Npun_F4864"/>
</dbReference>
<dbReference type="KEGG" id="npu:Npun_F4864"/>
<dbReference type="eggNOG" id="COG0224">
    <property type="taxonomic scope" value="Bacteria"/>
</dbReference>
<dbReference type="HOGENOM" id="CLU_050669_0_0_3"/>
<dbReference type="OrthoDB" id="9812769at2"/>
<dbReference type="PhylomeDB" id="B2J059"/>
<dbReference type="Proteomes" id="UP000001191">
    <property type="component" value="Chromosome"/>
</dbReference>
<dbReference type="GO" id="GO:0031676">
    <property type="term" value="C:plasma membrane-derived thylakoid membrane"/>
    <property type="evidence" value="ECO:0007669"/>
    <property type="project" value="UniProtKB-SubCell"/>
</dbReference>
<dbReference type="GO" id="GO:0045259">
    <property type="term" value="C:proton-transporting ATP synthase complex"/>
    <property type="evidence" value="ECO:0007669"/>
    <property type="project" value="UniProtKB-KW"/>
</dbReference>
<dbReference type="GO" id="GO:0005524">
    <property type="term" value="F:ATP binding"/>
    <property type="evidence" value="ECO:0007669"/>
    <property type="project" value="UniProtKB-UniRule"/>
</dbReference>
<dbReference type="GO" id="GO:0046933">
    <property type="term" value="F:proton-transporting ATP synthase activity, rotational mechanism"/>
    <property type="evidence" value="ECO:0007669"/>
    <property type="project" value="UniProtKB-UniRule"/>
</dbReference>
<dbReference type="CDD" id="cd12151">
    <property type="entry name" value="F1-ATPase_gamma"/>
    <property type="match status" value="1"/>
</dbReference>
<dbReference type="FunFam" id="3.40.1380.10:FF:000006">
    <property type="entry name" value="ATP synthase gamma chain"/>
    <property type="match status" value="1"/>
</dbReference>
<dbReference type="FunFam" id="1.10.287.80:FF:000003">
    <property type="entry name" value="ATP synthase gamma chain, chloroplastic"/>
    <property type="match status" value="1"/>
</dbReference>
<dbReference type="FunFam" id="1.10.287.80:FF:000004">
    <property type="entry name" value="ATP synthase gamma chain, chloroplastic"/>
    <property type="match status" value="1"/>
</dbReference>
<dbReference type="Gene3D" id="3.40.1380.10">
    <property type="match status" value="1"/>
</dbReference>
<dbReference type="Gene3D" id="1.10.287.80">
    <property type="entry name" value="ATP synthase, gamma subunit, helix hairpin domain"/>
    <property type="match status" value="2"/>
</dbReference>
<dbReference type="HAMAP" id="MF_00815">
    <property type="entry name" value="ATP_synth_gamma_bact"/>
    <property type="match status" value="1"/>
</dbReference>
<dbReference type="InterPro" id="IPR035968">
    <property type="entry name" value="ATP_synth_F1_ATPase_gsu"/>
</dbReference>
<dbReference type="InterPro" id="IPR000131">
    <property type="entry name" value="ATP_synth_F1_gsu"/>
</dbReference>
<dbReference type="InterPro" id="IPR023632">
    <property type="entry name" value="ATP_synth_F1_gsu_CS"/>
</dbReference>
<dbReference type="NCBIfam" id="TIGR01146">
    <property type="entry name" value="ATPsyn_F1gamma"/>
    <property type="match status" value="1"/>
</dbReference>
<dbReference type="NCBIfam" id="NF004145">
    <property type="entry name" value="PRK05621.1-2"/>
    <property type="match status" value="1"/>
</dbReference>
<dbReference type="PANTHER" id="PTHR11693">
    <property type="entry name" value="ATP SYNTHASE GAMMA CHAIN"/>
    <property type="match status" value="1"/>
</dbReference>
<dbReference type="PANTHER" id="PTHR11693:SF41">
    <property type="entry name" value="ATP SYNTHASE GAMMA CHAIN, CHLOROPLASTIC"/>
    <property type="match status" value="1"/>
</dbReference>
<dbReference type="Pfam" id="PF00231">
    <property type="entry name" value="ATP-synt"/>
    <property type="match status" value="1"/>
</dbReference>
<dbReference type="PRINTS" id="PR00126">
    <property type="entry name" value="ATPASEGAMMA"/>
</dbReference>
<dbReference type="SUPFAM" id="SSF52943">
    <property type="entry name" value="ATP synthase (F1-ATPase), gamma subunit"/>
    <property type="match status" value="1"/>
</dbReference>
<dbReference type="PROSITE" id="PS00153">
    <property type="entry name" value="ATPASE_GAMMA"/>
    <property type="match status" value="1"/>
</dbReference>
<sequence>MANLKAIRDRIQSVKNTKKITEAMRLVAAARVRRAQEQVLATRPFADRLAQVLYGLQSRLRFEEANLPLLRKREVKSVGLLVISGDRGLCGGYNNNVIRRAENRAKEIKAEGLNYQFVLVGRKSTQYFQRRDQPIDATYSGLEQIPTAAEANQIADQLLSLFLSEEVDRIELIYTRFLSLVSSRPVVQTLLPLDPQGLEAADDEIFRLTTRGGKFEVEREKVASQVRPLAPDMIFEQDPVQILDSLLPLYLSNQLLRALQESAASELAARMTAMSNASENAGELINTLTLSYNKARQAAITQELLEVVGGAEALT</sequence>
<protein>
    <recommendedName>
        <fullName evidence="1">ATP synthase gamma chain</fullName>
    </recommendedName>
    <alternativeName>
        <fullName evidence="1">ATP synthase F1 sector gamma subunit</fullName>
    </alternativeName>
    <alternativeName>
        <fullName evidence="1">F-ATPase gamma subunit</fullName>
    </alternativeName>
</protein>
<proteinExistence type="inferred from homology"/>